<dbReference type="EMBL" id="AC009451">
    <property type="status" value="NOT_ANNOTATED_CDS"/>
    <property type="molecule type" value="Genomic_DNA"/>
</dbReference>
<dbReference type="EMBL" id="BC146949">
    <property type="protein sequence ID" value="AAI46950.1"/>
    <property type="molecule type" value="mRNA"/>
</dbReference>
<dbReference type="EMBL" id="BC146966">
    <property type="protein sequence ID" value="AAI46967.1"/>
    <property type="molecule type" value="mRNA"/>
</dbReference>
<dbReference type="CCDS" id="CCDS45609.1"/>
<dbReference type="RefSeq" id="NP_001121548.1">
    <property type="nucleotide sequence ID" value="NM_001128076.3"/>
</dbReference>
<dbReference type="RefSeq" id="NP_001381885.1">
    <property type="nucleotide sequence ID" value="NM_001394956.1"/>
</dbReference>
<dbReference type="RefSeq" id="XP_005256689.1">
    <property type="nucleotide sequence ID" value="XM_005256632.4"/>
</dbReference>
<dbReference type="RefSeq" id="XP_005256690.1">
    <property type="nucleotide sequence ID" value="XM_005256633.4"/>
</dbReference>
<dbReference type="SMR" id="A6NLX3"/>
<dbReference type="BioGRID" id="132645">
    <property type="interactions" value="60"/>
</dbReference>
<dbReference type="FunCoup" id="A6NLX3">
    <property type="interactions" value="186"/>
</dbReference>
<dbReference type="IntAct" id="A6NLX3">
    <property type="interactions" value="60"/>
</dbReference>
<dbReference type="STRING" id="9606.ENSP00000329522"/>
<dbReference type="iPTMnet" id="A6NLX3"/>
<dbReference type="PhosphoSitePlus" id="A6NLX3"/>
<dbReference type="BioMuta" id="SPDYE4"/>
<dbReference type="MassIVE" id="A6NLX3"/>
<dbReference type="PaxDb" id="9606-ENSP00000329522"/>
<dbReference type="ProteomicsDB" id="1497"/>
<dbReference type="Antibodypedia" id="6244">
    <property type="antibodies" value="8 antibodies from 7 providers"/>
</dbReference>
<dbReference type="DNASU" id="388333"/>
<dbReference type="Ensembl" id="ENST00000328794.10">
    <property type="protein sequence ID" value="ENSP00000329522.6"/>
    <property type="gene ID" value="ENSG00000183318.12"/>
</dbReference>
<dbReference type="Ensembl" id="ENST00000688021.1">
    <property type="protein sequence ID" value="ENSP00000510287.1"/>
    <property type="gene ID" value="ENSG00000183318.12"/>
</dbReference>
<dbReference type="Ensembl" id="ENST00000689094.1">
    <property type="protein sequence ID" value="ENSP00000509506.1"/>
    <property type="gene ID" value="ENSG00000183318.12"/>
</dbReference>
<dbReference type="GeneID" id="388333"/>
<dbReference type="KEGG" id="hsa:388333"/>
<dbReference type="MANE-Select" id="ENST00000689094.1">
    <property type="protein sequence ID" value="ENSP00000509506.1"/>
    <property type="RefSeq nucleotide sequence ID" value="NM_001394956.1"/>
    <property type="RefSeq protein sequence ID" value="NP_001381885.1"/>
</dbReference>
<dbReference type="UCSC" id="uc010cnz.1">
    <property type="organism name" value="human"/>
</dbReference>
<dbReference type="AGR" id="HGNC:35463"/>
<dbReference type="CTD" id="388333"/>
<dbReference type="GeneCards" id="SPDYE4"/>
<dbReference type="HGNC" id="HGNC:35463">
    <property type="gene designation" value="SPDYE4"/>
</dbReference>
<dbReference type="HPA" id="ENSG00000183318">
    <property type="expression patterns" value="Tissue enriched (testis)"/>
</dbReference>
<dbReference type="MIM" id="617628">
    <property type="type" value="gene"/>
</dbReference>
<dbReference type="neXtProt" id="NX_A6NLX3"/>
<dbReference type="PharmGKB" id="PA164726235"/>
<dbReference type="VEuPathDB" id="HostDB:ENSG00000183318"/>
<dbReference type="eggNOG" id="ENOG502SSQN">
    <property type="taxonomic scope" value="Eukaryota"/>
</dbReference>
<dbReference type="GeneTree" id="ENSGT00940000154173"/>
<dbReference type="HOGENOM" id="CLU_070353_3_0_1"/>
<dbReference type="InParanoid" id="A6NLX3"/>
<dbReference type="OMA" id="PWQYQRI"/>
<dbReference type="OrthoDB" id="9536938at2759"/>
<dbReference type="PAN-GO" id="A6NLX3">
    <property type="GO annotations" value="1 GO annotation based on evolutionary models"/>
</dbReference>
<dbReference type="PhylomeDB" id="A6NLX3"/>
<dbReference type="TreeFam" id="TF329827"/>
<dbReference type="PathwayCommons" id="A6NLX3"/>
<dbReference type="SignaLink" id="A6NLX3"/>
<dbReference type="BioGRID-ORCS" id="388333">
    <property type="hits" value="12 hits in 1136 CRISPR screens"/>
</dbReference>
<dbReference type="GenomeRNAi" id="388333"/>
<dbReference type="Pharos" id="A6NLX3">
    <property type="development level" value="Tdark"/>
</dbReference>
<dbReference type="PRO" id="PR:A6NLX3"/>
<dbReference type="Proteomes" id="UP000005640">
    <property type="component" value="Chromosome 17"/>
</dbReference>
<dbReference type="RNAct" id="A6NLX3">
    <property type="molecule type" value="protein"/>
</dbReference>
<dbReference type="Bgee" id="ENSG00000183318">
    <property type="expression patterns" value="Expressed in male germ line stem cell (sensu Vertebrata) in testis and 57 other cell types or tissues"/>
</dbReference>
<dbReference type="ExpressionAtlas" id="A6NLX3">
    <property type="expression patterns" value="baseline and differential"/>
</dbReference>
<dbReference type="GO" id="GO:0019901">
    <property type="term" value="F:protein kinase binding"/>
    <property type="evidence" value="ECO:0000318"/>
    <property type="project" value="GO_Central"/>
</dbReference>
<dbReference type="InterPro" id="IPR020984">
    <property type="entry name" value="Speedy"/>
</dbReference>
<dbReference type="PANTHER" id="PTHR31156">
    <property type="entry name" value="WBSCR19-LIKE PROTEIN"/>
    <property type="match status" value="1"/>
</dbReference>
<dbReference type="Pfam" id="PF11357">
    <property type="entry name" value="Spy1"/>
    <property type="match status" value="1"/>
</dbReference>
<name>SPDE4_HUMAN</name>
<gene>
    <name evidence="4" type="primary">SPDYE4</name>
</gene>
<proteinExistence type="evidence at protein level"/>
<sequence length="237" mass="27806">MASGQARPPFEEESPQPSTTVRSPEVVVDDEVPGPSAPWIDPSPQPQSLGLKRKSEWSDESEEELEEELELERAPEPEDTWVVETLCGLKMKLKRKRASSVLPEHHEAFNRLLGDPVVQKFLAWDKDLRVSDKYLLAMVIAYFSRAGLFSWQYQRIHFFLALYLASDMEEDNQAPKQDIFSFLYGKNYSQRPLFHKLRYQLLCSMRWRTWVSPEEMEEIQAYDPEHWVWARDRTLIS</sequence>
<accession>A6NLX3</accession>
<accession>B2RUZ6</accession>
<evidence type="ECO:0000256" key="1">
    <source>
        <dbReference type="SAM" id="MobiDB-lite"/>
    </source>
</evidence>
<evidence type="ECO:0000269" key="2">
    <source>
    </source>
</evidence>
<evidence type="ECO:0000305" key="3"/>
<evidence type="ECO:0000312" key="4">
    <source>
        <dbReference type="HGNC" id="HGNC:35463"/>
    </source>
</evidence>
<reference key="1">
    <citation type="journal article" date="2006" name="Nature">
        <title>DNA sequence of human chromosome 17 and analysis of rearrangement in the human lineage.</title>
        <authorList>
            <person name="Zody M.C."/>
            <person name="Garber M."/>
            <person name="Adams D.J."/>
            <person name="Sharpe T."/>
            <person name="Harrow J."/>
            <person name="Lupski J.R."/>
            <person name="Nicholson C."/>
            <person name="Searle S.M."/>
            <person name="Wilming L."/>
            <person name="Young S.K."/>
            <person name="Abouelleil A."/>
            <person name="Allen N.R."/>
            <person name="Bi W."/>
            <person name="Bloom T."/>
            <person name="Borowsky M.L."/>
            <person name="Bugalter B.E."/>
            <person name="Butler J."/>
            <person name="Chang J.L."/>
            <person name="Chen C.-K."/>
            <person name="Cook A."/>
            <person name="Corum B."/>
            <person name="Cuomo C.A."/>
            <person name="de Jong P.J."/>
            <person name="DeCaprio D."/>
            <person name="Dewar K."/>
            <person name="FitzGerald M."/>
            <person name="Gilbert J."/>
            <person name="Gibson R."/>
            <person name="Gnerre S."/>
            <person name="Goldstein S."/>
            <person name="Grafham D.V."/>
            <person name="Grocock R."/>
            <person name="Hafez N."/>
            <person name="Hagopian D.S."/>
            <person name="Hart E."/>
            <person name="Norman C.H."/>
            <person name="Humphray S."/>
            <person name="Jaffe D.B."/>
            <person name="Jones M."/>
            <person name="Kamal M."/>
            <person name="Khodiyar V.K."/>
            <person name="LaButti K."/>
            <person name="Laird G."/>
            <person name="Lehoczky J."/>
            <person name="Liu X."/>
            <person name="Lokyitsang T."/>
            <person name="Loveland J."/>
            <person name="Lui A."/>
            <person name="Macdonald P."/>
            <person name="Major J.E."/>
            <person name="Matthews L."/>
            <person name="Mauceli E."/>
            <person name="McCarroll S.A."/>
            <person name="Mihalev A.H."/>
            <person name="Mudge J."/>
            <person name="Nguyen C."/>
            <person name="Nicol R."/>
            <person name="O'Leary S.B."/>
            <person name="Osoegawa K."/>
            <person name="Schwartz D.C."/>
            <person name="Shaw-Smith C."/>
            <person name="Stankiewicz P."/>
            <person name="Steward C."/>
            <person name="Swarbreck D."/>
            <person name="Venkataraman V."/>
            <person name="Whittaker C.A."/>
            <person name="Yang X."/>
            <person name="Zimmer A.R."/>
            <person name="Bradley A."/>
            <person name="Hubbard T."/>
            <person name="Birren B.W."/>
            <person name="Rogers J."/>
            <person name="Lander E.S."/>
            <person name="Nusbaum C."/>
        </authorList>
    </citation>
    <scope>NUCLEOTIDE SEQUENCE [LARGE SCALE GENOMIC DNA]</scope>
</reference>
<reference key="2">
    <citation type="journal article" date="2004" name="Genome Res.">
        <title>The status, quality, and expansion of the NIH full-length cDNA project: the Mammalian Gene Collection (MGC).</title>
        <authorList>
            <consortium name="The MGC Project Team"/>
        </authorList>
    </citation>
    <scope>NUCLEOTIDE SEQUENCE [LARGE SCALE MRNA]</scope>
</reference>
<reference key="3">
    <citation type="journal article" date="2012" name="Cell. Mol. Life Sci.">
        <title>Evolution of the Cdk-activator Speedy/RINGO in vertebrates.</title>
        <authorList>
            <person name="Chauhan S."/>
            <person name="Zheng X."/>
            <person name="Tan Y.Y."/>
            <person name="Tay B.H."/>
            <person name="Lim S."/>
            <person name="Venkatesh B."/>
            <person name="Kaldis P."/>
        </authorList>
    </citation>
    <scope>TISSUE SPECIFICITY</scope>
</reference>
<organism>
    <name type="scientific">Homo sapiens</name>
    <name type="common">Human</name>
    <dbReference type="NCBI Taxonomy" id="9606"/>
    <lineage>
        <taxon>Eukaryota</taxon>
        <taxon>Metazoa</taxon>
        <taxon>Chordata</taxon>
        <taxon>Craniata</taxon>
        <taxon>Vertebrata</taxon>
        <taxon>Euteleostomi</taxon>
        <taxon>Mammalia</taxon>
        <taxon>Eutheria</taxon>
        <taxon>Euarchontoglires</taxon>
        <taxon>Primates</taxon>
        <taxon>Haplorrhini</taxon>
        <taxon>Catarrhini</taxon>
        <taxon>Hominidae</taxon>
        <taxon>Homo</taxon>
    </lineage>
</organism>
<feature type="chain" id="PRO_0000349195" description="Speedy protein E4">
    <location>
        <begin position="1"/>
        <end position="237"/>
    </location>
</feature>
<feature type="region of interest" description="Disordered" evidence="1">
    <location>
        <begin position="1"/>
        <end position="61"/>
    </location>
</feature>
<keyword id="KW-1185">Reference proteome</keyword>
<protein>
    <recommendedName>
        <fullName evidence="3">Speedy protein E4</fullName>
    </recommendedName>
</protein>
<comment type="interaction">
    <interactant intactId="EBI-12047907">
        <id>A6NLX3</id>
    </interactant>
    <interactant intactId="EBI-723869">
        <id>O60885</id>
        <label>BRD4</label>
    </interactant>
    <organismsDiffer>false</organismsDiffer>
    <experiments>4</experiments>
</comment>
<comment type="interaction">
    <interactant intactId="EBI-12047907">
        <id>A6NLX3</id>
    </interactant>
    <interactant intactId="EBI-1245761">
        <id>Q00526</id>
        <label>CDK3</label>
    </interactant>
    <organismsDiffer>false</organismsDiffer>
    <experiments>3</experiments>
</comment>
<comment type="interaction">
    <interactant intactId="EBI-12047907">
        <id>A6NLX3</id>
    </interactant>
    <interactant intactId="EBI-1041567">
        <id>Q00535</id>
        <label>CDK5</label>
    </interactant>
    <organismsDiffer>false</organismsDiffer>
    <experiments>4</experiments>
</comment>
<comment type="interaction">
    <interactant intactId="EBI-12047907">
        <id>A6NLX3</id>
    </interactant>
    <interactant intactId="EBI-456371">
        <id>P61024</id>
        <label>CKS1B</label>
    </interactant>
    <organismsDiffer>false</organismsDiffer>
    <experiments>6</experiments>
</comment>
<comment type="interaction">
    <interactant intactId="EBI-12047907">
        <id>A6NLX3</id>
    </interactant>
    <interactant intactId="EBI-709928">
        <id>P35557</id>
        <label>GCK</label>
    </interactant>
    <organismsDiffer>false</organismsDiffer>
    <experiments>3</experiments>
</comment>
<comment type="interaction">
    <interactant intactId="EBI-12047907">
        <id>A6NLX3</id>
    </interactant>
    <interactant intactId="EBI-746309">
        <id>Q92917</id>
        <label>GPKOW</label>
    </interactant>
    <organismsDiffer>false</organismsDiffer>
    <experiments>3</experiments>
</comment>
<comment type="interaction">
    <interactant intactId="EBI-12047907">
        <id>A6NLX3</id>
    </interactant>
    <interactant intactId="EBI-746778">
        <id>Q96A72</id>
        <label>MAGOHB</label>
    </interactant>
    <organismsDiffer>false</organismsDiffer>
    <experiments>5</experiments>
</comment>
<comment type="interaction">
    <interactant intactId="EBI-12047907">
        <id>A6NLX3</id>
    </interactant>
    <interactant intactId="EBI-741158">
        <id>Q96HA8</id>
        <label>NTAQ1</label>
    </interactant>
    <organismsDiffer>false</organismsDiffer>
    <experiments>3</experiments>
</comment>
<comment type="interaction">
    <interactant intactId="EBI-12047907">
        <id>A6NLX3</id>
    </interactant>
    <interactant intactId="EBI-2557649">
        <id>Q9Y3C6</id>
        <label>PPIL1</label>
    </interactant>
    <organismsDiffer>false</organismsDiffer>
    <experiments>3</experiments>
</comment>
<comment type="interaction">
    <interactant intactId="EBI-12047907">
        <id>A6NLX3</id>
    </interactant>
    <interactant intactId="EBI-347462">
        <id>P47897</id>
        <label>QARS1</label>
    </interactant>
    <organismsDiffer>false</organismsDiffer>
    <experiments>3</experiments>
</comment>
<comment type="interaction">
    <interactant intactId="EBI-12047907">
        <id>A6NLX3</id>
    </interactant>
    <interactant intactId="EBI-12264956">
        <id>Q9NVG8</id>
        <label>TBC1D13</label>
    </interactant>
    <organismsDiffer>false</organismsDiffer>
    <experiments>3</experiments>
</comment>
<comment type="interaction">
    <interactant intactId="EBI-12047907">
        <id>A6NLX3</id>
    </interactant>
    <interactant intactId="EBI-743272">
        <id>O75604</id>
        <label>USP2</label>
    </interactant>
    <organismsDiffer>false</organismsDiffer>
    <experiments>3</experiments>
</comment>
<comment type="tissue specificity">
    <text evidence="2">Predominantly expressed in testis.</text>
</comment>
<comment type="similarity">
    <text evidence="3">Belongs to the Speedy/Ringo family.</text>
</comment>